<accession>A6L8C6</accession>
<feature type="chain" id="PRO_1000012899" description="Lysine--tRNA ligase">
    <location>
        <begin position="1"/>
        <end position="576"/>
    </location>
</feature>
<feature type="binding site" evidence="1">
    <location>
        <position position="412"/>
    </location>
    <ligand>
        <name>Mg(2+)</name>
        <dbReference type="ChEBI" id="CHEBI:18420"/>
        <label>1</label>
    </ligand>
</feature>
<feature type="binding site" evidence="1">
    <location>
        <position position="419"/>
    </location>
    <ligand>
        <name>Mg(2+)</name>
        <dbReference type="ChEBI" id="CHEBI:18420"/>
        <label>1</label>
    </ligand>
</feature>
<feature type="binding site" evidence="1">
    <location>
        <position position="419"/>
    </location>
    <ligand>
        <name>Mg(2+)</name>
        <dbReference type="ChEBI" id="CHEBI:18420"/>
        <label>2</label>
    </ligand>
</feature>
<sequence>MNLLELSEQEIIRRNSMEQLRQMGIEPYPAAEYVTNAFSKEIKETFKDDAEPRPVSIAGRIMSRRIMGKASFMELQDSEGRIQVYISRDDICPDENKDTYNVVFKKLLDIGDFVGIKGFVFRTQMGEISVHAQELTVLSKSLRPLPVVKYKDGVAYDGFNDPELRYRQRYVDLVVNEGVKDIFMKRAAIIKTMRTALDEAGYTEVETPILQSIAGGASARPFITHHNSLDIDLYLRIATELYLKRLIVGGFEGVYEIGKNFRNEGMDRTHNPEFTCMELYVQYKDYNWMMSFTEKLLERICIAVNGTSESTIDGKTISFKAPFRRLPILEAIKEKTGYDLEGKTEDEIRAICKELKMEIDDTMGKGKLIDEIFGEFCEGTFIQPTFIIDYPVEMSPLTKMHRSKPGLTERFELMVNGKELANAYSELNDPIDQEERFKEQLRLSEKGDDEAMFIDQDFLRALQFGMPPTSGIGIGIDRLVMLMTGQTTIQEVLLFPQMRPEKTVKKDNADKYVALGISEEWVPALQKAGYLTVEMLKNANANKLRQELCELNKKYKLELQNPTVQEIEAWIANVGE</sequence>
<evidence type="ECO:0000255" key="1">
    <source>
        <dbReference type="HAMAP-Rule" id="MF_00252"/>
    </source>
</evidence>
<comment type="catalytic activity">
    <reaction evidence="1">
        <text>tRNA(Lys) + L-lysine + ATP = L-lysyl-tRNA(Lys) + AMP + diphosphate</text>
        <dbReference type="Rhea" id="RHEA:20792"/>
        <dbReference type="Rhea" id="RHEA-COMP:9696"/>
        <dbReference type="Rhea" id="RHEA-COMP:9697"/>
        <dbReference type="ChEBI" id="CHEBI:30616"/>
        <dbReference type="ChEBI" id="CHEBI:32551"/>
        <dbReference type="ChEBI" id="CHEBI:33019"/>
        <dbReference type="ChEBI" id="CHEBI:78442"/>
        <dbReference type="ChEBI" id="CHEBI:78529"/>
        <dbReference type="ChEBI" id="CHEBI:456215"/>
        <dbReference type="EC" id="6.1.1.6"/>
    </reaction>
</comment>
<comment type="cofactor">
    <cofactor evidence="1">
        <name>Mg(2+)</name>
        <dbReference type="ChEBI" id="CHEBI:18420"/>
    </cofactor>
    <text evidence="1">Binds 3 Mg(2+) ions per subunit.</text>
</comment>
<comment type="subunit">
    <text evidence="1">Homodimer.</text>
</comment>
<comment type="subcellular location">
    <subcellularLocation>
        <location evidence="1">Cytoplasm</location>
    </subcellularLocation>
</comment>
<comment type="similarity">
    <text evidence="1">Belongs to the class-II aminoacyl-tRNA synthetase family.</text>
</comment>
<protein>
    <recommendedName>
        <fullName evidence="1">Lysine--tRNA ligase</fullName>
        <ecNumber evidence="1">6.1.1.6</ecNumber>
    </recommendedName>
    <alternativeName>
        <fullName evidence="1">Lysyl-tRNA synthetase</fullName>
        <shortName evidence="1">LysRS</shortName>
    </alternativeName>
</protein>
<organism>
    <name type="scientific">Parabacteroides distasonis (strain ATCC 8503 / DSM 20701 / CIP 104284 / JCM 5825 / NCTC 11152)</name>
    <dbReference type="NCBI Taxonomy" id="435591"/>
    <lineage>
        <taxon>Bacteria</taxon>
        <taxon>Pseudomonadati</taxon>
        <taxon>Bacteroidota</taxon>
        <taxon>Bacteroidia</taxon>
        <taxon>Bacteroidales</taxon>
        <taxon>Tannerellaceae</taxon>
        <taxon>Parabacteroides</taxon>
    </lineage>
</organism>
<name>SYK_PARD8</name>
<gene>
    <name evidence="1" type="primary">lysS</name>
    <name type="ordered locus">BDI_0150</name>
</gene>
<dbReference type="EC" id="6.1.1.6" evidence="1"/>
<dbReference type="EMBL" id="CP000140">
    <property type="protein sequence ID" value="ABR41940.1"/>
    <property type="molecule type" value="Genomic_DNA"/>
</dbReference>
<dbReference type="RefSeq" id="WP_011965911.1">
    <property type="nucleotide sequence ID" value="NC_009615.1"/>
</dbReference>
<dbReference type="SMR" id="A6L8C6"/>
<dbReference type="STRING" id="435591.BDI_0150"/>
<dbReference type="PaxDb" id="435591-BDI_0150"/>
<dbReference type="KEGG" id="pdi:BDI_0150"/>
<dbReference type="PATRIC" id="fig|435591.13.peg.142"/>
<dbReference type="eggNOG" id="COG1190">
    <property type="taxonomic scope" value="Bacteria"/>
</dbReference>
<dbReference type="HOGENOM" id="CLU_008255_6_0_10"/>
<dbReference type="BioCyc" id="PDIS435591:G1G5A-151-MONOMER"/>
<dbReference type="Proteomes" id="UP000000566">
    <property type="component" value="Chromosome"/>
</dbReference>
<dbReference type="GO" id="GO:0005829">
    <property type="term" value="C:cytosol"/>
    <property type="evidence" value="ECO:0007669"/>
    <property type="project" value="TreeGrafter"/>
</dbReference>
<dbReference type="GO" id="GO:0005524">
    <property type="term" value="F:ATP binding"/>
    <property type="evidence" value="ECO:0007669"/>
    <property type="project" value="UniProtKB-UniRule"/>
</dbReference>
<dbReference type="GO" id="GO:0004824">
    <property type="term" value="F:lysine-tRNA ligase activity"/>
    <property type="evidence" value="ECO:0007669"/>
    <property type="project" value="UniProtKB-UniRule"/>
</dbReference>
<dbReference type="GO" id="GO:0000287">
    <property type="term" value="F:magnesium ion binding"/>
    <property type="evidence" value="ECO:0007669"/>
    <property type="project" value="UniProtKB-UniRule"/>
</dbReference>
<dbReference type="GO" id="GO:0000049">
    <property type="term" value="F:tRNA binding"/>
    <property type="evidence" value="ECO:0007669"/>
    <property type="project" value="TreeGrafter"/>
</dbReference>
<dbReference type="GO" id="GO:0006430">
    <property type="term" value="P:lysyl-tRNA aminoacylation"/>
    <property type="evidence" value="ECO:0007669"/>
    <property type="project" value="UniProtKB-UniRule"/>
</dbReference>
<dbReference type="CDD" id="cd00775">
    <property type="entry name" value="LysRS_core"/>
    <property type="match status" value="1"/>
</dbReference>
<dbReference type="CDD" id="cd04322">
    <property type="entry name" value="LysRS_N"/>
    <property type="match status" value="1"/>
</dbReference>
<dbReference type="FunFam" id="2.40.50.140:FF:000024">
    <property type="entry name" value="Lysine--tRNA ligase"/>
    <property type="match status" value="1"/>
</dbReference>
<dbReference type="FunFam" id="3.30.930.10:FF:000238">
    <property type="entry name" value="Lysine--tRNA ligase"/>
    <property type="match status" value="1"/>
</dbReference>
<dbReference type="Gene3D" id="3.30.930.10">
    <property type="entry name" value="Bira Bifunctional Protein, Domain 2"/>
    <property type="match status" value="1"/>
</dbReference>
<dbReference type="Gene3D" id="2.40.50.140">
    <property type="entry name" value="Nucleic acid-binding proteins"/>
    <property type="match status" value="1"/>
</dbReference>
<dbReference type="HAMAP" id="MF_00252">
    <property type="entry name" value="Lys_tRNA_synth_class2"/>
    <property type="match status" value="1"/>
</dbReference>
<dbReference type="InterPro" id="IPR004364">
    <property type="entry name" value="Aa-tRNA-synt_II"/>
</dbReference>
<dbReference type="InterPro" id="IPR006195">
    <property type="entry name" value="aa-tRNA-synth_II"/>
</dbReference>
<dbReference type="InterPro" id="IPR045864">
    <property type="entry name" value="aa-tRNA-synth_II/BPL/LPL"/>
</dbReference>
<dbReference type="InterPro" id="IPR025567">
    <property type="entry name" value="DUF4332"/>
</dbReference>
<dbReference type="InterPro" id="IPR002313">
    <property type="entry name" value="Lys-tRNA-ligase_II"/>
</dbReference>
<dbReference type="InterPro" id="IPR044136">
    <property type="entry name" value="Lys-tRNA-ligase_II_N"/>
</dbReference>
<dbReference type="InterPro" id="IPR018149">
    <property type="entry name" value="Lys-tRNA-synth_II_C"/>
</dbReference>
<dbReference type="InterPro" id="IPR012340">
    <property type="entry name" value="NA-bd_OB-fold"/>
</dbReference>
<dbReference type="InterPro" id="IPR004365">
    <property type="entry name" value="NA-bd_OB_tRNA"/>
</dbReference>
<dbReference type="NCBIfam" id="TIGR00499">
    <property type="entry name" value="lysS_bact"/>
    <property type="match status" value="1"/>
</dbReference>
<dbReference type="NCBIfam" id="NF001756">
    <property type="entry name" value="PRK00484.1"/>
    <property type="match status" value="1"/>
</dbReference>
<dbReference type="PANTHER" id="PTHR42918:SF15">
    <property type="entry name" value="LYSINE--TRNA LIGASE, CHLOROPLASTIC_MITOCHONDRIAL"/>
    <property type="match status" value="1"/>
</dbReference>
<dbReference type="PANTHER" id="PTHR42918">
    <property type="entry name" value="LYSYL-TRNA SYNTHETASE"/>
    <property type="match status" value="1"/>
</dbReference>
<dbReference type="Pfam" id="PF14229">
    <property type="entry name" value="DUF4332"/>
    <property type="match status" value="1"/>
</dbReference>
<dbReference type="Pfam" id="PF00152">
    <property type="entry name" value="tRNA-synt_2"/>
    <property type="match status" value="1"/>
</dbReference>
<dbReference type="Pfam" id="PF01336">
    <property type="entry name" value="tRNA_anti-codon"/>
    <property type="match status" value="1"/>
</dbReference>
<dbReference type="PRINTS" id="PR00982">
    <property type="entry name" value="TRNASYNTHLYS"/>
</dbReference>
<dbReference type="SUPFAM" id="SSF55681">
    <property type="entry name" value="Class II aaRS and biotin synthetases"/>
    <property type="match status" value="1"/>
</dbReference>
<dbReference type="SUPFAM" id="SSF50249">
    <property type="entry name" value="Nucleic acid-binding proteins"/>
    <property type="match status" value="1"/>
</dbReference>
<dbReference type="PROSITE" id="PS50862">
    <property type="entry name" value="AA_TRNA_LIGASE_II"/>
    <property type="match status" value="1"/>
</dbReference>
<reference key="1">
    <citation type="journal article" date="2007" name="PLoS Biol.">
        <title>Evolution of symbiotic bacteria in the distal human intestine.</title>
        <authorList>
            <person name="Xu J."/>
            <person name="Mahowald M.A."/>
            <person name="Ley R.E."/>
            <person name="Lozupone C.A."/>
            <person name="Hamady M."/>
            <person name="Martens E.C."/>
            <person name="Henrissat B."/>
            <person name="Coutinho P.M."/>
            <person name="Minx P."/>
            <person name="Latreille P."/>
            <person name="Cordum H."/>
            <person name="Van Brunt A."/>
            <person name="Kim K."/>
            <person name="Fulton R.S."/>
            <person name="Fulton L.A."/>
            <person name="Clifton S.W."/>
            <person name="Wilson R.K."/>
            <person name="Knight R.D."/>
            <person name="Gordon J.I."/>
        </authorList>
    </citation>
    <scope>NUCLEOTIDE SEQUENCE [LARGE SCALE GENOMIC DNA]</scope>
    <source>
        <strain>ATCC 8503 / DSM 20701 / CIP 104284 / JCM 5825 / NCTC 11152</strain>
    </source>
</reference>
<proteinExistence type="inferred from homology"/>
<keyword id="KW-0030">Aminoacyl-tRNA synthetase</keyword>
<keyword id="KW-0067">ATP-binding</keyword>
<keyword id="KW-0963">Cytoplasm</keyword>
<keyword id="KW-0436">Ligase</keyword>
<keyword id="KW-0460">Magnesium</keyword>
<keyword id="KW-0479">Metal-binding</keyword>
<keyword id="KW-0547">Nucleotide-binding</keyword>
<keyword id="KW-0648">Protein biosynthesis</keyword>
<keyword id="KW-1185">Reference proteome</keyword>